<gene>
    <name evidence="1" type="primary">prs2</name>
    <name type="ordered locus">lin0509</name>
</gene>
<organism>
    <name type="scientific">Listeria innocua serovar 6a (strain ATCC BAA-680 / CLIP 11262)</name>
    <dbReference type="NCBI Taxonomy" id="272626"/>
    <lineage>
        <taxon>Bacteria</taxon>
        <taxon>Bacillati</taxon>
        <taxon>Bacillota</taxon>
        <taxon>Bacilli</taxon>
        <taxon>Bacillales</taxon>
        <taxon>Listeriaceae</taxon>
        <taxon>Listeria</taxon>
    </lineage>
</organism>
<protein>
    <recommendedName>
        <fullName evidence="1">Putative ribose-phosphate pyrophosphokinase 2</fullName>
        <shortName evidence="1">RPPK 2</shortName>
        <ecNumber evidence="1">2.7.6.1</ecNumber>
    </recommendedName>
    <alternativeName>
        <fullName evidence="1">5-phospho-D-ribosyl alpha-1-diphosphate synthase 2</fullName>
    </alternativeName>
    <alternativeName>
        <fullName evidence="1">Phosphoribosyl diphosphate synthase 2</fullName>
    </alternativeName>
    <alternativeName>
        <fullName evidence="1">Phosphoribosyl pyrophosphate synthase 2</fullName>
        <shortName evidence="1">P-Rib-PP synthase 2</shortName>
        <shortName evidence="1">PRPP synthase 2</shortName>
        <shortName evidence="1">PRPPase 2</shortName>
    </alternativeName>
</protein>
<reference key="1">
    <citation type="journal article" date="2001" name="Science">
        <title>Comparative genomics of Listeria species.</title>
        <authorList>
            <person name="Glaser P."/>
            <person name="Frangeul L."/>
            <person name="Buchrieser C."/>
            <person name="Rusniok C."/>
            <person name="Amend A."/>
            <person name="Baquero F."/>
            <person name="Berche P."/>
            <person name="Bloecker H."/>
            <person name="Brandt P."/>
            <person name="Chakraborty T."/>
            <person name="Charbit A."/>
            <person name="Chetouani F."/>
            <person name="Couve E."/>
            <person name="de Daruvar A."/>
            <person name="Dehoux P."/>
            <person name="Domann E."/>
            <person name="Dominguez-Bernal G."/>
            <person name="Duchaud E."/>
            <person name="Durant L."/>
            <person name="Dussurget O."/>
            <person name="Entian K.-D."/>
            <person name="Fsihi H."/>
            <person name="Garcia-del Portillo F."/>
            <person name="Garrido P."/>
            <person name="Gautier L."/>
            <person name="Goebel W."/>
            <person name="Gomez-Lopez N."/>
            <person name="Hain T."/>
            <person name="Hauf J."/>
            <person name="Jackson D."/>
            <person name="Jones L.-M."/>
            <person name="Kaerst U."/>
            <person name="Kreft J."/>
            <person name="Kuhn M."/>
            <person name="Kunst F."/>
            <person name="Kurapkat G."/>
            <person name="Madueno E."/>
            <person name="Maitournam A."/>
            <person name="Mata Vicente J."/>
            <person name="Ng E."/>
            <person name="Nedjari H."/>
            <person name="Nordsiek G."/>
            <person name="Novella S."/>
            <person name="de Pablos B."/>
            <person name="Perez-Diaz J.-C."/>
            <person name="Purcell R."/>
            <person name="Remmel B."/>
            <person name="Rose M."/>
            <person name="Schlueter T."/>
            <person name="Simoes N."/>
            <person name="Tierrez A."/>
            <person name="Vazquez-Boland J.-A."/>
            <person name="Voss H."/>
            <person name="Wehland J."/>
            <person name="Cossart P."/>
        </authorList>
    </citation>
    <scope>NUCLEOTIDE SEQUENCE [LARGE SCALE GENOMIC DNA]</scope>
    <source>
        <strain>ATCC BAA-680 / CLIP 11262</strain>
    </source>
</reference>
<name>KPRS2_LISIN</name>
<evidence type="ECO:0000255" key="1">
    <source>
        <dbReference type="HAMAP-Rule" id="MF_00583"/>
    </source>
</evidence>
<accession>Q92EF1</accession>
<sequence length="311" mass="34431">MTGKMKLFSVTSERPLATKIADYLDIPLCEVELQKFSDGEVKINIEESIRGTNAYVVQSMNANVNERLMELLIMVDALKRASVHSINIIMPYYGYARQDRKARSREPITAKLMANLIQRAGANRLITVDLHAAQIQGFFNIPIDHLSAVPLIGDYLIEKYGEEDVVVVAPDHSGVVRARRIADRLNAPIAILNRKPRPHEDEIMSVIGDVKGKVAIVVDDIIDTGVRATTSADILLEKGAVEVIACATHSVMAGDATERLQNSRIKEVITSDSIDLPEEKQFEKLTTISIGRILGRAIEGVQENRSLHPLF</sequence>
<dbReference type="EC" id="2.7.6.1" evidence="1"/>
<dbReference type="EMBL" id="AL596165">
    <property type="protein sequence ID" value="CAC95741.1"/>
    <property type="molecule type" value="Genomic_DNA"/>
</dbReference>
<dbReference type="PIR" id="AE1496">
    <property type="entry name" value="AE1496"/>
</dbReference>
<dbReference type="RefSeq" id="WP_003765526.1">
    <property type="nucleotide sequence ID" value="NC_003212.1"/>
</dbReference>
<dbReference type="SMR" id="Q92EF1"/>
<dbReference type="STRING" id="272626.gene:17564835"/>
<dbReference type="KEGG" id="lin:prs.2"/>
<dbReference type="eggNOG" id="COG0462">
    <property type="taxonomic scope" value="Bacteria"/>
</dbReference>
<dbReference type="HOGENOM" id="CLU_033546_2_0_9"/>
<dbReference type="OrthoDB" id="9777067at2"/>
<dbReference type="UniPathway" id="UPA00087">
    <property type="reaction ID" value="UER00172"/>
</dbReference>
<dbReference type="Proteomes" id="UP000002513">
    <property type="component" value="Chromosome"/>
</dbReference>
<dbReference type="GO" id="GO:0005737">
    <property type="term" value="C:cytoplasm"/>
    <property type="evidence" value="ECO:0007669"/>
    <property type="project" value="UniProtKB-SubCell"/>
</dbReference>
<dbReference type="GO" id="GO:0002189">
    <property type="term" value="C:ribose phosphate diphosphokinase complex"/>
    <property type="evidence" value="ECO:0007669"/>
    <property type="project" value="TreeGrafter"/>
</dbReference>
<dbReference type="GO" id="GO:0005524">
    <property type="term" value="F:ATP binding"/>
    <property type="evidence" value="ECO:0007669"/>
    <property type="project" value="UniProtKB-KW"/>
</dbReference>
<dbReference type="GO" id="GO:0016301">
    <property type="term" value="F:kinase activity"/>
    <property type="evidence" value="ECO:0007669"/>
    <property type="project" value="UniProtKB-KW"/>
</dbReference>
<dbReference type="GO" id="GO:0000287">
    <property type="term" value="F:magnesium ion binding"/>
    <property type="evidence" value="ECO:0007669"/>
    <property type="project" value="UniProtKB-UniRule"/>
</dbReference>
<dbReference type="GO" id="GO:0004749">
    <property type="term" value="F:ribose phosphate diphosphokinase activity"/>
    <property type="evidence" value="ECO:0007669"/>
    <property type="project" value="UniProtKB-UniRule"/>
</dbReference>
<dbReference type="GO" id="GO:0006015">
    <property type="term" value="P:5-phosphoribose 1-diphosphate biosynthetic process"/>
    <property type="evidence" value="ECO:0007669"/>
    <property type="project" value="UniProtKB-UniRule"/>
</dbReference>
<dbReference type="GO" id="GO:0006164">
    <property type="term" value="P:purine nucleotide biosynthetic process"/>
    <property type="evidence" value="ECO:0007669"/>
    <property type="project" value="TreeGrafter"/>
</dbReference>
<dbReference type="GO" id="GO:0009156">
    <property type="term" value="P:ribonucleoside monophosphate biosynthetic process"/>
    <property type="evidence" value="ECO:0007669"/>
    <property type="project" value="InterPro"/>
</dbReference>
<dbReference type="CDD" id="cd06223">
    <property type="entry name" value="PRTases_typeI"/>
    <property type="match status" value="1"/>
</dbReference>
<dbReference type="FunFam" id="3.40.50.2020:FF:000007">
    <property type="entry name" value="Ribose-phosphate pyrophosphokinase"/>
    <property type="match status" value="1"/>
</dbReference>
<dbReference type="Gene3D" id="3.40.50.2020">
    <property type="match status" value="2"/>
</dbReference>
<dbReference type="HAMAP" id="MF_00583_B">
    <property type="entry name" value="RibP_PPkinase_B"/>
    <property type="match status" value="1"/>
</dbReference>
<dbReference type="InterPro" id="IPR000842">
    <property type="entry name" value="PRib_PP_synth_CS"/>
</dbReference>
<dbReference type="InterPro" id="IPR029099">
    <property type="entry name" value="Pribosyltran_N"/>
</dbReference>
<dbReference type="InterPro" id="IPR000836">
    <property type="entry name" value="PRibTrfase_dom"/>
</dbReference>
<dbReference type="InterPro" id="IPR029057">
    <property type="entry name" value="PRTase-like"/>
</dbReference>
<dbReference type="InterPro" id="IPR005946">
    <property type="entry name" value="Rib-P_diPkinase"/>
</dbReference>
<dbReference type="InterPro" id="IPR037515">
    <property type="entry name" value="Rib-P_diPkinase_bac"/>
</dbReference>
<dbReference type="NCBIfam" id="NF002320">
    <property type="entry name" value="PRK01259.1"/>
    <property type="match status" value="1"/>
</dbReference>
<dbReference type="NCBIfam" id="TIGR01251">
    <property type="entry name" value="ribP_PPkin"/>
    <property type="match status" value="1"/>
</dbReference>
<dbReference type="PANTHER" id="PTHR10210">
    <property type="entry name" value="RIBOSE-PHOSPHATE DIPHOSPHOKINASE FAMILY MEMBER"/>
    <property type="match status" value="1"/>
</dbReference>
<dbReference type="PANTHER" id="PTHR10210:SF41">
    <property type="entry name" value="RIBOSE-PHOSPHATE PYROPHOSPHOKINASE 1, CHLOROPLASTIC"/>
    <property type="match status" value="1"/>
</dbReference>
<dbReference type="Pfam" id="PF14572">
    <property type="entry name" value="Pribosyl_synth"/>
    <property type="match status" value="1"/>
</dbReference>
<dbReference type="Pfam" id="PF13793">
    <property type="entry name" value="Pribosyltran_N"/>
    <property type="match status" value="1"/>
</dbReference>
<dbReference type="SMART" id="SM01400">
    <property type="entry name" value="Pribosyltran_N"/>
    <property type="match status" value="1"/>
</dbReference>
<dbReference type="SUPFAM" id="SSF53271">
    <property type="entry name" value="PRTase-like"/>
    <property type="match status" value="2"/>
</dbReference>
<dbReference type="PROSITE" id="PS00114">
    <property type="entry name" value="PRPP_SYNTHASE"/>
    <property type="match status" value="1"/>
</dbReference>
<proteinExistence type="inferred from homology"/>
<feature type="chain" id="PRO_0000141153" description="Putative ribose-phosphate pyrophosphokinase 2">
    <location>
        <begin position="1"/>
        <end position="311"/>
    </location>
</feature>
<feature type="binding site" evidence="1">
    <location>
        <begin position="38"/>
        <end position="40"/>
    </location>
    <ligand>
        <name>ATP</name>
        <dbReference type="ChEBI" id="CHEBI:30616"/>
    </ligand>
</feature>
<feature type="binding site" evidence="1">
    <location>
        <begin position="97"/>
        <end position="98"/>
    </location>
    <ligand>
        <name>ATP</name>
        <dbReference type="ChEBI" id="CHEBI:30616"/>
    </ligand>
</feature>
<feature type="binding site" evidence="1">
    <location>
        <position position="131"/>
    </location>
    <ligand>
        <name>Mg(2+)</name>
        <dbReference type="ChEBI" id="CHEBI:18420"/>
        <label>1</label>
    </ligand>
</feature>
<feature type="binding site" evidence="1">
    <location>
        <position position="171"/>
    </location>
    <ligand>
        <name>Mg(2+)</name>
        <dbReference type="ChEBI" id="CHEBI:18420"/>
        <label>2</label>
    </ligand>
</feature>
<feature type="binding site" evidence="1">
    <location>
        <position position="219"/>
    </location>
    <ligand>
        <name>D-ribose 5-phosphate</name>
        <dbReference type="ChEBI" id="CHEBI:78346"/>
    </ligand>
</feature>
<comment type="function">
    <text evidence="1">Involved in the biosynthesis of the central metabolite phospho-alpha-D-ribosyl-1-pyrophosphate (PRPP) via the transfer of pyrophosphoryl group from ATP to 1-hydroxyl of ribose-5-phosphate (Rib-5-P).</text>
</comment>
<comment type="catalytic activity">
    <reaction evidence="1">
        <text>D-ribose 5-phosphate + ATP = 5-phospho-alpha-D-ribose 1-diphosphate + AMP + H(+)</text>
        <dbReference type="Rhea" id="RHEA:15609"/>
        <dbReference type="ChEBI" id="CHEBI:15378"/>
        <dbReference type="ChEBI" id="CHEBI:30616"/>
        <dbReference type="ChEBI" id="CHEBI:58017"/>
        <dbReference type="ChEBI" id="CHEBI:78346"/>
        <dbReference type="ChEBI" id="CHEBI:456215"/>
        <dbReference type="EC" id="2.7.6.1"/>
    </reaction>
</comment>
<comment type="cofactor">
    <cofactor evidence="1">
        <name>Mg(2+)</name>
        <dbReference type="ChEBI" id="CHEBI:18420"/>
    </cofactor>
    <text evidence="1">Binds 2 Mg(2+) ions per subunit.</text>
</comment>
<comment type="pathway">
    <text evidence="1">Metabolic intermediate biosynthesis; 5-phospho-alpha-D-ribose 1-diphosphate biosynthesis; 5-phospho-alpha-D-ribose 1-diphosphate from D-ribose 5-phosphate (route I): step 1/1.</text>
</comment>
<comment type="subunit">
    <text evidence="1">Homohexamer.</text>
</comment>
<comment type="subcellular location">
    <subcellularLocation>
        <location evidence="1">Cytoplasm</location>
    </subcellularLocation>
</comment>
<comment type="similarity">
    <text evidence="1">Belongs to the ribose-phosphate pyrophosphokinase family. Class I subfamily.</text>
</comment>
<comment type="caution">
    <text evidence="1">Part of a set of proteins in which some residues (ACT_SITE, NP_BIND, REGION and BINDING) are not conserved.</text>
</comment>
<keyword id="KW-0067">ATP-binding</keyword>
<keyword id="KW-0963">Cytoplasm</keyword>
<keyword id="KW-0418">Kinase</keyword>
<keyword id="KW-0460">Magnesium</keyword>
<keyword id="KW-0479">Metal-binding</keyword>
<keyword id="KW-0545">Nucleotide biosynthesis</keyword>
<keyword id="KW-0547">Nucleotide-binding</keyword>
<keyword id="KW-0808">Transferase</keyword>